<gene>
    <name type="primary">ESM1</name>
</gene>
<evidence type="ECO:0000255" key="1"/>
<evidence type="ECO:0000255" key="2">
    <source>
        <dbReference type="PROSITE-ProRule" id="PRU00653"/>
    </source>
</evidence>
<evidence type="ECO:0000269" key="3">
    <source>
    </source>
</evidence>
<evidence type="ECO:0000269" key="4">
    <source>
    </source>
</evidence>
<evidence type="ECO:0000269" key="5">
    <source>
    </source>
</evidence>
<evidence type="ECO:0000303" key="6">
    <source>
    </source>
</evidence>
<evidence type="ECO:0000303" key="7">
    <source ref="3"/>
</evidence>
<evidence type="ECO:0000305" key="8"/>
<name>ESM1_HUMAN</name>
<dbReference type="EMBL" id="X89426">
    <property type="protein sequence ID" value="CAA61597.1"/>
    <property type="molecule type" value="mRNA"/>
</dbReference>
<dbReference type="EMBL" id="AJ401091">
    <property type="protein sequence ID" value="CAB94771.1"/>
    <property type="molecule type" value="Genomic_DNA"/>
</dbReference>
<dbReference type="EMBL" id="AJ401092">
    <property type="protein sequence ID" value="CAB94771.1"/>
    <property type="status" value="JOINED"/>
    <property type="molecule type" value="Genomic_DNA"/>
</dbReference>
<dbReference type="EMBL" id="AJ973643">
    <property type="protein sequence ID" value="CAJ13737.1"/>
    <property type="molecule type" value="mRNA"/>
</dbReference>
<dbReference type="EMBL" id="AK300634">
    <property type="protein sequence ID" value="BAG62324.1"/>
    <property type="molecule type" value="mRNA"/>
</dbReference>
<dbReference type="EMBL" id="AK311817">
    <property type="protein sequence ID" value="BAG34760.1"/>
    <property type="molecule type" value="mRNA"/>
</dbReference>
<dbReference type="EMBL" id="AC010436">
    <property type="status" value="NOT_ANNOTATED_CDS"/>
    <property type="molecule type" value="Genomic_DNA"/>
</dbReference>
<dbReference type="EMBL" id="AC034238">
    <property type="status" value="NOT_ANNOTATED_CDS"/>
    <property type="molecule type" value="Genomic_DNA"/>
</dbReference>
<dbReference type="EMBL" id="BC011989">
    <property type="protein sequence ID" value="AAH11989.1"/>
    <property type="molecule type" value="mRNA"/>
</dbReference>
<dbReference type="CCDS" id="CCDS3963.1">
    <molecule id="Q9NQ30-1"/>
</dbReference>
<dbReference type="CCDS" id="CCDS47206.1">
    <molecule id="Q9NQ30-2"/>
</dbReference>
<dbReference type="RefSeq" id="NP_001129076.1">
    <molecule id="Q9NQ30-2"/>
    <property type="nucleotide sequence ID" value="NM_001135604.2"/>
</dbReference>
<dbReference type="RefSeq" id="NP_008967.1">
    <molecule id="Q9NQ30-1"/>
    <property type="nucleotide sequence ID" value="NM_007036.5"/>
</dbReference>
<dbReference type="BioGRID" id="116265">
    <property type="interactions" value="19"/>
</dbReference>
<dbReference type="FunCoup" id="Q9NQ30">
    <property type="interactions" value="43"/>
</dbReference>
<dbReference type="IntAct" id="Q9NQ30">
    <property type="interactions" value="17"/>
</dbReference>
<dbReference type="STRING" id="9606.ENSP00000370812"/>
<dbReference type="GlyCosmos" id="Q9NQ30">
    <property type="glycosylation" value="1 site, No reported glycans"/>
</dbReference>
<dbReference type="GlyGen" id="Q9NQ30">
    <property type="glycosylation" value="1 site"/>
</dbReference>
<dbReference type="iPTMnet" id="Q9NQ30"/>
<dbReference type="PhosphoSitePlus" id="Q9NQ30"/>
<dbReference type="BioMuta" id="ESM1"/>
<dbReference type="DMDM" id="13431509"/>
<dbReference type="MassIVE" id="Q9NQ30"/>
<dbReference type="PaxDb" id="9606-ENSP00000370812"/>
<dbReference type="PeptideAtlas" id="Q9NQ30"/>
<dbReference type="ProteomicsDB" id="82061">
    <molecule id="Q9NQ30-1"/>
</dbReference>
<dbReference type="ProteomicsDB" id="82062">
    <molecule id="Q9NQ30-2"/>
</dbReference>
<dbReference type="Antibodypedia" id="23370">
    <property type="antibodies" value="272 antibodies from 27 providers"/>
</dbReference>
<dbReference type="DNASU" id="11082"/>
<dbReference type="Ensembl" id="ENST00000381403.4">
    <molecule id="Q9NQ30-2"/>
    <property type="protein sequence ID" value="ENSP00000370810.4"/>
    <property type="gene ID" value="ENSG00000164283.13"/>
</dbReference>
<dbReference type="Ensembl" id="ENST00000381405.5">
    <molecule id="Q9NQ30-1"/>
    <property type="protein sequence ID" value="ENSP00000370812.4"/>
    <property type="gene ID" value="ENSG00000164283.13"/>
</dbReference>
<dbReference type="GeneID" id="11082"/>
<dbReference type="KEGG" id="hsa:11082"/>
<dbReference type="MANE-Select" id="ENST00000381405.5">
    <property type="protein sequence ID" value="ENSP00000370812.4"/>
    <property type="RefSeq nucleotide sequence ID" value="NM_007036.5"/>
    <property type="RefSeq protein sequence ID" value="NP_008967.1"/>
</dbReference>
<dbReference type="UCSC" id="uc003jpk.4">
    <molecule id="Q9NQ30-1"/>
    <property type="organism name" value="human"/>
</dbReference>
<dbReference type="AGR" id="HGNC:3466"/>
<dbReference type="CTD" id="11082"/>
<dbReference type="DisGeNET" id="11082"/>
<dbReference type="GeneCards" id="ESM1"/>
<dbReference type="HGNC" id="HGNC:3466">
    <property type="gene designation" value="ESM1"/>
</dbReference>
<dbReference type="HPA" id="ENSG00000164283">
    <property type="expression patterns" value="Tissue enhanced (kidney, thyroid gland)"/>
</dbReference>
<dbReference type="MIM" id="601521">
    <property type="type" value="gene"/>
</dbReference>
<dbReference type="neXtProt" id="NX_Q9NQ30"/>
<dbReference type="OpenTargets" id="ENSG00000164283"/>
<dbReference type="PharmGKB" id="PA27883"/>
<dbReference type="VEuPathDB" id="HostDB:ENSG00000164283"/>
<dbReference type="eggNOG" id="KOG1218">
    <property type="taxonomic scope" value="Eukaryota"/>
</dbReference>
<dbReference type="GeneTree" id="ENSGT00390000018810"/>
<dbReference type="HOGENOM" id="CLU_103395_0_0_1"/>
<dbReference type="InParanoid" id="Q9NQ30"/>
<dbReference type="OMA" id="TAWSAKY"/>
<dbReference type="OrthoDB" id="9868586at2759"/>
<dbReference type="PAN-GO" id="Q9NQ30">
    <property type="GO annotations" value="4 GO annotations based on evolutionary models"/>
</dbReference>
<dbReference type="PhylomeDB" id="Q9NQ30"/>
<dbReference type="PathwayCommons" id="Q9NQ30"/>
<dbReference type="SignaLink" id="Q9NQ30"/>
<dbReference type="BioGRID-ORCS" id="11082">
    <property type="hits" value="8 hits in 1139 CRISPR screens"/>
</dbReference>
<dbReference type="GeneWiki" id="ESM1"/>
<dbReference type="GenomeRNAi" id="11082"/>
<dbReference type="Pharos" id="Q9NQ30">
    <property type="development level" value="Tbio"/>
</dbReference>
<dbReference type="PRO" id="PR:Q9NQ30"/>
<dbReference type="Proteomes" id="UP000005640">
    <property type="component" value="Chromosome 5"/>
</dbReference>
<dbReference type="RNAct" id="Q9NQ30">
    <property type="molecule type" value="protein"/>
</dbReference>
<dbReference type="Bgee" id="ENSG00000164283">
    <property type="expression patterns" value="Expressed in islet of Langerhans and 111 other cell types or tissues"/>
</dbReference>
<dbReference type="ExpressionAtlas" id="Q9NQ30">
    <property type="expression patterns" value="baseline and differential"/>
</dbReference>
<dbReference type="GO" id="GO:0062023">
    <property type="term" value="C:collagen-containing extracellular matrix"/>
    <property type="evidence" value="ECO:0007005"/>
    <property type="project" value="GO_Central"/>
</dbReference>
<dbReference type="GO" id="GO:0031012">
    <property type="term" value="C:extracellular matrix"/>
    <property type="evidence" value="ECO:0007005"/>
    <property type="project" value="GO_Central"/>
</dbReference>
<dbReference type="GO" id="GO:0005576">
    <property type="term" value="C:extracellular region"/>
    <property type="evidence" value="ECO:0007669"/>
    <property type="project" value="UniProtKB-SubCell"/>
</dbReference>
<dbReference type="GO" id="GO:0005201">
    <property type="term" value="F:extracellular matrix structural constituent"/>
    <property type="evidence" value="ECO:0007005"/>
    <property type="project" value="GO_Central"/>
</dbReference>
<dbReference type="GO" id="GO:0005171">
    <property type="term" value="F:hepatocyte growth factor receptor binding"/>
    <property type="evidence" value="ECO:0000353"/>
    <property type="project" value="UniProtKB"/>
</dbReference>
<dbReference type="GO" id="GO:0005178">
    <property type="term" value="F:integrin binding"/>
    <property type="evidence" value="ECO:0000353"/>
    <property type="project" value="UniProtKB"/>
</dbReference>
<dbReference type="GO" id="GO:0001525">
    <property type="term" value="P:angiogenesis"/>
    <property type="evidence" value="ECO:0000270"/>
    <property type="project" value="UniProtKB"/>
</dbReference>
<dbReference type="GO" id="GO:0008284">
    <property type="term" value="P:positive regulation of cell population proliferation"/>
    <property type="evidence" value="ECO:0000314"/>
    <property type="project" value="UniProtKB"/>
</dbReference>
<dbReference type="GO" id="GO:1902204">
    <property type="term" value="P:positive regulation of hepatocyte growth factor receptor signaling pathway"/>
    <property type="evidence" value="ECO:0000314"/>
    <property type="project" value="UniProtKB"/>
</dbReference>
<dbReference type="GO" id="GO:0002040">
    <property type="term" value="P:sprouting angiogenesis"/>
    <property type="evidence" value="ECO:0000315"/>
    <property type="project" value="UniProtKB"/>
</dbReference>
<dbReference type="FunFam" id="4.10.40.20:FF:000002">
    <property type="entry name" value="Endothelial cell-specific molecule 1"/>
    <property type="match status" value="1"/>
</dbReference>
<dbReference type="Gene3D" id="4.10.40.20">
    <property type="match status" value="1"/>
</dbReference>
<dbReference type="InterPro" id="IPR038850">
    <property type="entry name" value="ESM1"/>
</dbReference>
<dbReference type="InterPro" id="IPR009030">
    <property type="entry name" value="Growth_fac_rcpt_cys_sf"/>
</dbReference>
<dbReference type="InterPro" id="IPR000867">
    <property type="entry name" value="IGFBP-like"/>
</dbReference>
<dbReference type="PANTHER" id="PTHR15428:SF0">
    <property type="entry name" value="ENDOTHELIAL CELL-SPECIFIC MOLECULE 1"/>
    <property type="match status" value="1"/>
</dbReference>
<dbReference type="PANTHER" id="PTHR15428">
    <property type="entry name" value="ENDOTHELIAL CELL-SPECIFIC MOLECULE 1 ESM-1"/>
    <property type="match status" value="1"/>
</dbReference>
<dbReference type="Pfam" id="PF00219">
    <property type="entry name" value="IGFBP"/>
    <property type="match status" value="1"/>
</dbReference>
<dbReference type="SMART" id="SM00121">
    <property type="entry name" value="IB"/>
    <property type="match status" value="1"/>
</dbReference>
<dbReference type="SUPFAM" id="SSF57184">
    <property type="entry name" value="Growth factor receptor domain"/>
    <property type="match status" value="1"/>
</dbReference>
<dbReference type="PROSITE" id="PS51323">
    <property type="entry name" value="IGFBP_N_2"/>
    <property type="match status" value="1"/>
</dbReference>
<sequence>MKSVLLLTTLLVPAHLVAAWSNNYAVDCPQHCDSSECKSSPRCKRTVLDDCGCCRVCAAGRGETCYRTVSGMDGMKCGPGLRCQPSNGEDPFGEEFGICKDCPYGTFGMDCRETCNCQSGICDRGTGKCLKFPFFQYSVTKSSNRFVSLTEHDMASGDGNIVREEVVKENAAGSPVMRKWLNPR</sequence>
<accession>Q9NQ30</accession>
<accession>B2R4G3</accession>
<accession>Q15330</accession>
<accession>Q3V4E3</accession>
<accession>Q96ES3</accession>
<comment type="function">
    <text evidence="4">Involved in angiogenesis; promotes angiogenic sprouting. May have potent implications in lung endothelial cell-leukocyte interactions.</text>
</comment>
<comment type="subunit">
    <text>Monomer.</text>
</comment>
<comment type="interaction">
    <interactant intactId="EBI-12260294">
        <id>Q9NQ30</id>
    </interactant>
    <interactant intactId="EBI-12006944">
        <id>O43184-4</id>
        <label>ADAM12</label>
    </interactant>
    <organismsDiffer>false</organismsDiffer>
    <experiments>3</experiments>
</comment>
<comment type="interaction">
    <interactant intactId="EBI-12260294">
        <id>Q9NQ30</id>
    </interactant>
    <interactant intactId="EBI-11954519">
        <id>Q49AR9</id>
        <label>ANKS1A</label>
    </interactant>
    <organismsDiffer>false</organismsDiffer>
    <experiments>3</experiments>
</comment>
<comment type="interaction">
    <interactant intactId="EBI-12260294">
        <id>Q9NQ30</id>
    </interactant>
    <interactant intactId="EBI-745213">
        <id>P29972</id>
        <label>AQP1</label>
    </interactant>
    <organismsDiffer>false</organismsDiffer>
    <experiments>3</experiments>
</comment>
<comment type="interaction">
    <interactant intactId="EBI-12260294">
        <id>Q9NQ30</id>
    </interactant>
    <interactant intactId="EBI-11524452">
        <id>Q8N9N5-2</id>
        <label>BANP</label>
    </interactant>
    <organismsDiffer>false</organismsDiffer>
    <experiments>3</experiments>
</comment>
<comment type="interaction">
    <interactant intactId="EBI-12260294">
        <id>Q9NQ30</id>
    </interactant>
    <interactant intactId="EBI-11986315">
        <id>Q9H5Z6-2</id>
        <label>FAM124B</label>
    </interactant>
    <organismsDiffer>false</organismsDiffer>
    <experiments>3</experiments>
</comment>
<comment type="interaction">
    <interactant intactId="EBI-12260294">
        <id>Q9NQ30</id>
    </interactant>
    <interactant intactId="EBI-725515">
        <id>O43559</id>
        <label>FRS3</label>
    </interactant>
    <organismsDiffer>false</organismsDiffer>
    <experiments>3</experiments>
</comment>
<comment type="interaction">
    <interactant intactId="EBI-12260294">
        <id>Q9NQ30</id>
    </interactant>
    <interactant intactId="EBI-12094670">
        <id>Q8WUI4-6</id>
        <label>HDAC7</label>
    </interactant>
    <organismsDiffer>false</organismsDiffer>
    <experiments>3</experiments>
</comment>
<comment type="interaction">
    <interactant intactId="EBI-12260294">
        <id>Q9NQ30</id>
    </interactant>
    <interactant intactId="EBI-740785">
        <id>P49639</id>
        <label>HOXA1</label>
    </interactant>
    <organismsDiffer>false</organismsDiffer>
    <experiments>3</experiments>
</comment>
<comment type="interaction">
    <interactant intactId="EBI-12260294">
        <id>Q9NQ30</id>
    </interactant>
    <interactant intactId="EBI-10975473">
        <id>O60333-2</id>
        <label>KIF1B</label>
    </interactant>
    <organismsDiffer>false</organismsDiffer>
    <experiments>3</experiments>
</comment>
<comment type="interaction">
    <interactant intactId="EBI-12260294">
        <id>Q9NQ30</id>
    </interactant>
    <interactant intactId="EBI-16439278">
        <id>Q6FHY5</id>
        <label>MEOX2</label>
    </interactant>
    <organismsDiffer>false</organismsDiffer>
    <experiments>3</experiments>
</comment>
<comment type="interaction">
    <interactant intactId="EBI-12260294">
        <id>Q9NQ30</id>
    </interactant>
    <interactant intactId="EBI-11742836">
        <id>Q16656-4</id>
        <label>NRF1</label>
    </interactant>
    <organismsDiffer>false</organismsDiffer>
    <experiments>3</experiments>
</comment>
<comment type="interaction">
    <interactant intactId="EBI-12260294">
        <id>Q9NQ30</id>
    </interactant>
    <interactant intactId="EBI-1210753">
        <id>Q7Z417</id>
        <label>NUFIP2</label>
    </interactant>
    <organismsDiffer>false</organismsDiffer>
    <experiments>3</experiments>
</comment>
<comment type="interaction">
    <interactant intactId="EBI-12260294">
        <id>Q9NQ30</id>
    </interactant>
    <interactant intactId="EBI-1053424">
        <id>O43741</id>
        <label>PRKAB2</label>
    </interactant>
    <organismsDiffer>false</organismsDiffer>
    <experiments>3</experiments>
</comment>
<comment type="interaction">
    <interactant intactId="EBI-12260294">
        <id>Q9NQ30</id>
    </interactant>
    <interactant intactId="EBI-396669">
        <id>Q9Y3C5</id>
        <label>RNF11</label>
    </interactant>
    <organismsDiffer>false</organismsDiffer>
    <experiments>3</experiments>
</comment>
<comment type="interaction">
    <interactant intactId="EBI-12260294">
        <id>Q9NQ30</id>
    </interactant>
    <interactant intactId="EBI-11957216">
        <id>A8MV65-2</id>
        <label>VGLL3</label>
    </interactant>
    <organismsDiffer>false</organismsDiffer>
    <experiments>3</experiments>
</comment>
<comment type="interaction">
    <interactant intactId="EBI-12260294">
        <id>Q9NQ30</id>
    </interactant>
    <interactant intactId="EBI-720609">
        <id>O76024</id>
        <label>WFS1</label>
    </interactant>
    <organismsDiffer>false</organismsDiffer>
    <experiments>3</experiments>
</comment>
<comment type="interaction">
    <interactant intactId="EBI-12260294">
        <id>Q9NQ30</id>
    </interactant>
    <interactant intactId="EBI-765538">
        <id>P25490</id>
        <label>YY1</label>
    </interactant>
    <organismsDiffer>false</organismsDiffer>
    <experiments>3</experiments>
</comment>
<comment type="subcellular location">
    <subcellularLocation>
        <location>Secreted</location>
    </subcellularLocation>
</comment>
<comment type="alternative products">
    <event type="alternative splicing"/>
    <isoform>
        <id>Q9NQ30-1</id>
        <name>1</name>
        <sequence type="displayed"/>
    </isoform>
    <isoform>
        <id>Q9NQ30-2</id>
        <name>2</name>
        <sequence type="described" ref="VSP_042631"/>
    </isoform>
</comment>
<comment type="tissue specificity">
    <text>Expressed in lung, on the vascular capillary network within alveolar walls, and also at lower level in kidney.</text>
</comment>
<comment type="induction">
    <text>By TNF and IL1B/interleukin-1 beta, but not IL4/interleukin-4.</text>
</comment>
<comment type="PTM">
    <text>May contain intrachain disulfide bonds.</text>
</comment>
<comment type="PTM">
    <text evidence="3">O-glycosylated; contains chondroitin sulfate and dermatan sulfate.</text>
</comment>
<keyword id="KW-0025">Alternative splicing</keyword>
<keyword id="KW-0037">Angiogenesis</keyword>
<keyword id="KW-1015">Disulfide bond</keyword>
<keyword id="KW-0325">Glycoprotein</keyword>
<keyword id="KW-0654">Proteoglycan</keyword>
<keyword id="KW-1267">Proteomics identification</keyword>
<keyword id="KW-1185">Reference proteome</keyword>
<keyword id="KW-0964">Secreted</keyword>
<keyword id="KW-0732">Signal</keyword>
<protein>
    <recommendedName>
        <fullName>Endothelial cell-specific molecule 1</fullName>
        <shortName>ESM-1</shortName>
    </recommendedName>
</protein>
<feature type="signal peptide" evidence="1">
    <location>
        <begin position="1"/>
        <end position="19"/>
    </location>
</feature>
<feature type="chain" id="PRO_0000014394" description="Endothelial cell-specific molecule 1">
    <location>
        <begin position="20"/>
        <end position="184"/>
    </location>
</feature>
<feature type="domain" description="IGFBP N-terminal" evidence="2">
    <location>
        <begin position="24"/>
        <end position="102"/>
    </location>
</feature>
<feature type="glycosylation site" description="O-linked (Xyl...) (chondroitin sulfate) serine" evidence="3 5">
    <location>
        <position position="156"/>
    </location>
</feature>
<feature type="disulfide bond" evidence="2">
    <location>
        <begin position="28"/>
        <end position="51"/>
    </location>
</feature>
<feature type="disulfide bond" evidence="2">
    <location>
        <begin position="32"/>
        <end position="53"/>
    </location>
</feature>
<feature type="disulfide bond" evidence="2">
    <location>
        <begin position="37"/>
        <end position="54"/>
    </location>
</feature>
<feature type="disulfide bond" evidence="2">
    <location>
        <begin position="43"/>
        <end position="57"/>
    </location>
</feature>
<feature type="disulfide bond" evidence="2">
    <location>
        <begin position="65"/>
        <end position="83"/>
    </location>
</feature>
<feature type="disulfide bond" evidence="2">
    <location>
        <begin position="77"/>
        <end position="99"/>
    </location>
</feature>
<feature type="splice variant" id="VSP_042631" description="In isoform 2." evidence="6 7">
    <location>
        <begin position="101"/>
        <end position="150"/>
    </location>
</feature>
<feature type="sequence conflict" description="In Ref. 6; AAH11989." evidence="8" ref="6">
    <original>K</original>
    <variation>E</variation>
    <location>
        <position position="44"/>
    </location>
</feature>
<feature type="sequence conflict" description="In Ref. 2; CAB94771." evidence="8" ref="2">
    <location>
        <position position="151"/>
    </location>
</feature>
<reference key="1">
    <citation type="journal article" date="1996" name="J. Biol. Chem.">
        <title>ESM-1 is a novel human endothelial cell-specific molecule expressed in lung and regulated by cytokines.</title>
        <authorList>
            <person name="Lassalle P."/>
            <person name="Molet S."/>
            <person name="Janin A."/>
            <person name="Vander-Heyden J.E."/>
            <person name="Tavernier J."/>
            <person name="Fiers W."/>
            <person name="Devos R.E."/>
            <person name="Tonnel A.-B."/>
        </authorList>
    </citation>
    <scope>NUCLEOTIDE SEQUENCE [MRNA] (ISOFORM 1)</scope>
    <source>
        <tissue>Umbilical vein endothelial cell</tissue>
    </source>
</reference>
<reference key="2">
    <citation type="submission" date="2000-06" db="EMBL/GenBank/DDBJ databases">
        <title>Sequencing of the human ESM-1 gene and analysis of its 5' flanking region.</title>
        <authorList>
            <person name="Vedrenne C."/>
            <person name="Kervoaze G."/>
            <person name="Lassalle P."/>
        </authorList>
    </citation>
    <scope>NUCLEOTIDE SEQUENCE [GENOMIC DNA]</scope>
    <source>
        <tissue>Leukocyte</tissue>
    </source>
</reference>
<reference key="3">
    <citation type="submission" date="2005-06" db="EMBL/GenBank/DDBJ databases">
        <title>Exon 2 of the endocan gene contributes to tumorigenesis and its expression is increased in human lung tumor vascular cells.</title>
        <authorList>
            <person name="Depontieu F."/>
            <person name="Grigoriu B."/>
            <person name="Scherpereel A."/>
            <person name="Adam E."/>
            <person name="Lafitte J.J."/>
            <person name="Ouatas T."/>
            <person name="Delehedde M."/>
            <person name="Lyon M."/>
            <person name="Copin M.C."/>
            <person name="Janin A."/>
            <person name="Tonnel A.B."/>
            <person name="Tsicopoulos A."/>
            <person name="Lassalle P."/>
        </authorList>
    </citation>
    <scope>NUCLEOTIDE SEQUENCE [MRNA] (ISOFORM 2)</scope>
</reference>
<reference key="4">
    <citation type="journal article" date="2004" name="Nat. Genet.">
        <title>Complete sequencing and characterization of 21,243 full-length human cDNAs.</title>
        <authorList>
            <person name="Ota T."/>
            <person name="Suzuki Y."/>
            <person name="Nishikawa T."/>
            <person name="Otsuki T."/>
            <person name="Sugiyama T."/>
            <person name="Irie R."/>
            <person name="Wakamatsu A."/>
            <person name="Hayashi K."/>
            <person name="Sato H."/>
            <person name="Nagai K."/>
            <person name="Kimura K."/>
            <person name="Makita H."/>
            <person name="Sekine M."/>
            <person name="Obayashi M."/>
            <person name="Nishi T."/>
            <person name="Shibahara T."/>
            <person name="Tanaka T."/>
            <person name="Ishii S."/>
            <person name="Yamamoto J."/>
            <person name="Saito K."/>
            <person name="Kawai Y."/>
            <person name="Isono Y."/>
            <person name="Nakamura Y."/>
            <person name="Nagahari K."/>
            <person name="Murakami K."/>
            <person name="Yasuda T."/>
            <person name="Iwayanagi T."/>
            <person name="Wagatsuma M."/>
            <person name="Shiratori A."/>
            <person name="Sudo H."/>
            <person name="Hosoiri T."/>
            <person name="Kaku Y."/>
            <person name="Kodaira H."/>
            <person name="Kondo H."/>
            <person name="Sugawara M."/>
            <person name="Takahashi M."/>
            <person name="Kanda K."/>
            <person name="Yokoi T."/>
            <person name="Furuya T."/>
            <person name="Kikkawa E."/>
            <person name="Omura Y."/>
            <person name="Abe K."/>
            <person name="Kamihara K."/>
            <person name="Katsuta N."/>
            <person name="Sato K."/>
            <person name="Tanikawa M."/>
            <person name="Yamazaki M."/>
            <person name="Ninomiya K."/>
            <person name="Ishibashi T."/>
            <person name="Yamashita H."/>
            <person name="Murakawa K."/>
            <person name="Fujimori K."/>
            <person name="Tanai H."/>
            <person name="Kimata M."/>
            <person name="Watanabe M."/>
            <person name="Hiraoka S."/>
            <person name="Chiba Y."/>
            <person name="Ishida S."/>
            <person name="Ono Y."/>
            <person name="Takiguchi S."/>
            <person name="Watanabe S."/>
            <person name="Yosida M."/>
            <person name="Hotuta T."/>
            <person name="Kusano J."/>
            <person name="Kanehori K."/>
            <person name="Takahashi-Fujii A."/>
            <person name="Hara H."/>
            <person name="Tanase T.-O."/>
            <person name="Nomura Y."/>
            <person name="Togiya S."/>
            <person name="Komai F."/>
            <person name="Hara R."/>
            <person name="Takeuchi K."/>
            <person name="Arita M."/>
            <person name="Imose N."/>
            <person name="Musashino K."/>
            <person name="Yuuki H."/>
            <person name="Oshima A."/>
            <person name="Sasaki N."/>
            <person name="Aotsuka S."/>
            <person name="Yoshikawa Y."/>
            <person name="Matsunawa H."/>
            <person name="Ichihara T."/>
            <person name="Shiohata N."/>
            <person name="Sano S."/>
            <person name="Moriya S."/>
            <person name="Momiyama H."/>
            <person name="Satoh N."/>
            <person name="Takami S."/>
            <person name="Terashima Y."/>
            <person name="Suzuki O."/>
            <person name="Nakagawa S."/>
            <person name="Senoh A."/>
            <person name="Mizoguchi H."/>
            <person name="Goto Y."/>
            <person name="Shimizu F."/>
            <person name="Wakebe H."/>
            <person name="Hishigaki H."/>
            <person name="Watanabe T."/>
            <person name="Sugiyama A."/>
            <person name="Takemoto M."/>
            <person name="Kawakami B."/>
            <person name="Yamazaki M."/>
            <person name="Watanabe K."/>
            <person name="Kumagai A."/>
            <person name="Itakura S."/>
            <person name="Fukuzumi Y."/>
            <person name="Fujimori Y."/>
            <person name="Komiyama M."/>
            <person name="Tashiro H."/>
            <person name="Tanigami A."/>
            <person name="Fujiwara T."/>
            <person name="Ono T."/>
            <person name="Yamada K."/>
            <person name="Fujii Y."/>
            <person name="Ozaki K."/>
            <person name="Hirao M."/>
            <person name="Ohmori Y."/>
            <person name="Kawabata A."/>
            <person name="Hikiji T."/>
            <person name="Kobatake N."/>
            <person name="Inagaki H."/>
            <person name="Ikema Y."/>
            <person name="Okamoto S."/>
            <person name="Okitani R."/>
            <person name="Kawakami T."/>
            <person name="Noguchi S."/>
            <person name="Itoh T."/>
            <person name="Shigeta K."/>
            <person name="Senba T."/>
            <person name="Matsumura K."/>
            <person name="Nakajima Y."/>
            <person name="Mizuno T."/>
            <person name="Morinaga M."/>
            <person name="Sasaki M."/>
            <person name="Togashi T."/>
            <person name="Oyama M."/>
            <person name="Hata H."/>
            <person name="Watanabe M."/>
            <person name="Komatsu T."/>
            <person name="Mizushima-Sugano J."/>
            <person name="Satoh T."/>
            <person name="Shirai Y."/>
            <person name="Takahashi Y."/>
            <person name="Nakagawa K."/>
            <person name="Okumura K."/>
            <person name="Nagase T."/>
            <person name="Nomura N."/>
            <person name="Kikuchi H."/>
            <person name="Masuho Y."/>
            <person name="Yamashita R."/>
            <person name="Nakai K."/>
            <person name="Yada T."/>
            <person name="Nakamura Y."/>
            <person name="Ohara O."/>
            <person name="Isogai T."/>
            <person name="Sugano S."/>
        </authorList>
    </citation>
    <scope>NUCLEOTIDE SEQUENCE [LARGE SCALE MRNA] (ISOFORMS 1 AND 2)</scope>
    <source>
        <tissue>Thalamus</tissue>
    </source>
</reference>
<reference key="5">
    <citation type="journal article" date="2004" name="Nature">
        <title>The DNA sequence and comparative analysis of human chromosome 5.</title>
        <authorList>
            <person name="Schmutz J."/>
            <person name="Martin J."/>
            <person name="Terry A."/>
            <person name="Couronne O."/>
            <person name="Grimwood J."/>
            <person name="Lowry S."/>
            <person name="Gordon L.A."/>
            <person name="Scott D."/>
            <person name="Xie G."/>
            <person name="Huang W."/>
            <person name="Hellsten U."/>
            <person name="Tran-Gyamfi M."/>
            <person name="She X."/>
            <person name="Prabhakar S."/>
            <person name="Aerts A."/>
            <person name="Altherr M."/>
            <person name="Bajorek E."/>
            <person name="Black S."/>
            <person name="Branscomb E."/>
            <person name="Caoile C."/>
            <person name="Challacombe J.F."/>
            <person name="Chan Y.M."/>
            <person name="Denys M."/>
            <person name="Detter J.C."/>
            <person name="Escobar J."/>
            <person name="Flowers D."/>
            <person name="Fotopulos D."/>
            <person name="Glavina T."/>
            <person name="Gomez M."/>
            <person name="Gonzales E."/>
            <person name="Goodstein D."/>
            <person name="Grigoriev I."/>
            <person name="Groza M."/>
            <person name="Hammon N."/>
            <person name="Hawkins T."/>
            <person name="Haydu L."/>
            <person name="Israni S."/>
            <person name="Jett J."/>
            <person name="Kadner K."/>
            <person name="Kimball H."/>
            <person name="Kobayashi A."/>
            <person name="Lopez F."/>
            <person name="Lou Y."/>
            <person name="Martinez D."/>
            <person name="Medina C."/>
            <person name="Morgan J."/>
            <person name="Nandkeshwar R."/>
            <person name="Noonan J.P."/>
            <person name="Pitluck S."/>
            <person name="Pollard M."/>
            <person name="Predki P."/>
            <person name="Priest J."/>
            <person name="Ramirez L."/>
            <person name="Retterer J."/>
            <person name="Rodriguez A."/>
            <person name="Rogers S."/>
            <person name="Salamov A."/>
            <person name="Salazar A."/>
            <person name="Thayer N."/>
            <person name="Tice H."/>
            <person name="Tsai M."/>
            <person name="Ustaszewska A."/>
            <person name="Vo N."/>
            <person name="Wheeler J."/>
            <person name="Wu K."/>
            <person name="Yang J."/>
            <person name="Dickson M."/>
            <person name="Cheng J.-F."/>
            <person name="Eichler E.E."/>
            <person name="Olsen A."/>
            <person name="Pennacchio L.A."/>
            <person name="Rokhsar D.S."/>
            <person name="Richardson P."/>
            <person name="Lucas S.M."/>
            <person name="Myers R.M."/>
            <person name="Rubin E.M."/>
        </authorList>
    </citation>
    <scope>NUCLEOTIDE SEQUENCE [LARGE SCALE GENOMIC DNA]</scope>
</reference>
<reference key="6">
    <citation type="journal article" date="2004" name="Genome Res.">
        <title>The status, quality, and expansion of the NIH full-length cDNA project: the Mammalian Gene Collection (MGC).</title>
        <authorList>
            <consortium name="The MGC Project Team"/>
        </authorList>
    </citation>
    <scope>NUCLEOTIDE SEQUENCE [LARGE SCALE MRNA] (ISOFORM 1)</scope>
    <source>
        <tissue>Lung</tissue>
    </source>
</reference>
<reference key="7">
    <citation type="journal article" date="2010" name="Circ. Res.">
        <title>Integrin cytoplasmic domain-associated protein-1 attenuates sprouting angiogenesis.</title>
        <authorList>
            <person name="Brutsch R."/>
            <person name="Liebler S.S."/>
            <person name="Wustehube J."/>
            <person name="Bartol A."/>
            <person name="Herberich S.E."/>
            <person name="Adam M.G."/>
            <person name="Telzerow A."/>
            <person name="Augustin H.G."/>
            <person name="Fischer A."/>
        </authorList>
    </citation>
    <scope>FUNCTION</scope>
</reference>
<reference key="8">
    <citation type="journal article" date="2010" name="Glycobiology">
        <title>Characterization and binding activity of the chondroitin/dermatan sulfate chain from Endocan, a soluble endothelial proteoglycan.</title>
        <authorList>
            <person name="Sarrazin S."/>
            <person name="Lyon M."/>
            <person name="Deakin J.A."/>
            <person name="Guerrini M."/>
            <person name="Lassalle P."/>
            <person name="Delehedde M."/>
            <person name="Lortat-Jacob H."/>
        </authorList>
    </citation>
    <scope>GLYCOSYLATION AT SER-156</scope>
</reference>
<reference key="9">
    <citation type="journal article" date="2020" name="Glycobiology">
        <title>An affinity chromatography and glycoproteomics workflow to profile the chondroitin sulfate proteoglycans that interact with malarial VAR2CSA in the placenta and in cancer.</title>
        <authorList>
            <person name="Toledo A.G."/>
            <person name="Pihl J."/>
            <person name="Spliid C.B."/>
            <person name="Persson A."/>
            <person name="Nilsson J."/>
            <person name="Pereira M.A."/>
            <person name="Gustavsson T."/>
            <person name="Choudhary S."/>
            <person name="Oo H.Z."/>
            <person name="Black P.C."/>
            <person name="Daugaard M."/>
            <person name="Esko J.D."/>
            <person name="Larson G."/>
            <person name="Salanti A."/>
            <person name="Clausen T.M."/>
        </authorList>
    </citation>
    <scope>GLYCOSYLATION AT SER-156</scope>
</reference>
<organism>
    <name type="scientific">Homo sapiens</name>
    <name type="common">Human</name>
    <dbReference type="NCBI Taxonomy" id="9606"/>
    <lineage>
        <taxon>Eukaryota</taxon>
        <taxon>Metazoa</taxon>
        <taxon>Chordata</taxon>
        <taxon>Craniata</taxon>
        <taxon>Vertebrata</taxon>
        <taxon>Euteleostomi</taxon>
        <taxon>Mammalia</taxon>
        <taxon>Eutheria</taxon>
        <taxon>Euarchontoglires</taxon>
        <taxon>Primates</taxon>
        <taxon>Haplorrhini</taxon>
        <taxon>Catarrhini</taxon>
        <taxon>Hominidae</taxon>
        <taxon>Homo</taxon>
    </lineage>
</organism>
<proteinExistence type="evidence at protein level"/>